<keyword id="KW-0066">ATP synthesis</keyword>
<keyword id="KW-0067">ATP-binding</keyword>
<keyword id="KW-1003">Cell membrane</keyword>
<keyword id="KW-0139">CF(1)</keyword>
<keyword id="KW-0375">Hydrogen ion transport</keyword>
<keyword id="KW-0406">Ion transport</keyword>
<keyword id="KW-0472">Membrane</keyword>
<keyword id="KW-0547">Nucleotide-binding</keyword>
<keyword id="KW-1185">Reference proteome</keyword>
<keyword id="KW-1278">Translocase</keyword>
<keyword id="KW-0813">Transport</keyword>
<name>ATPB_AMOA5</name>
<comment type="function">
    <text evidence="1">Produces ATP from ADP in the presence of a proton gradient across the membrane. The catalytic sites are hosted primarily by the beta subunits.</text>
</comment>
<comment type="catalytic activity">
    <reaction evidence="1">
        <text>ATP + H2O + 4 H(+)(in) = ADP + phosphate + 5 H(+)(out)</text>
        <dbReference type="Rhea" id="RHEA:57720"/>
        <dbReference type="ChEBI" id="CHEBI:15377"/>
        <dbReference type="ChEBI" id="CHEBI:15378"/>
        <dbReference type="ChEBI" id="CHEBI:30616"/>
        <dbReference type="ChEBI" id="CHEBI:43474"/>
        <dbReference type="ChEBI" id="CHEBI:456216"/>
        <dbReference type="EC" id="7.1.2.2"/>
    </reaction>
</comment>
<comment type="subunit">
    <text evidence="1">F-type ATPases have 2 components, CF(1) - the catalytic core - and CF(0) - the membrane proton channel. CF(1) has five subunits: alpha(3), beta(3), gamma(1), delta(1), epsilon(1). CF(0) has three main subunits: a(1), b(2) and c(9-12). The alpha and beta chains form an alternating ring which encloses part of the gamma chain. CF(1) is attached to CF(0) by a central stalk formed by the gamma and epsilon chains, while a peripheral stalk is formed by the delta and b chains.</text>
</comment>
<comment type="subcellular location">
    <subcellularLocation>
        <location evidence="1">Cell membrane</location>
        <topology evidence="1">Peripheral membrane protein</topology>
    </subcellularLocation>
</comment>
<comment type="similarity">
    <text evidence="1">Belongs to the ATPase alpha/beta chains family.</text>
</comment>
<sequence length="502" mass="54585">MSNIGAITQIIGPIIDVSFENSGKLPAILNALEVTKADGQKIVLECQQHLGQYAVRTIAMHETEGLVRGMKVVDTGAAIQMPVGEAIRGRLFNVIGEAIDGLPQPKTQQKLPIHRPAPKFKDISTATEVLYTGIKVIDLLAPYVKGGKIGLFGGAGVGKTVLIMELIDNIAKSYAGLSVFAGVGERTREGNDLLREMIESGVINYGEEFRKSMEAGGWDLSKVDREALNKSHATLVFGQMNESPGARARVALTGLTAAEYFRDGNGQEKGKDVLLFIDNIFRFTQAGSEVSTLLGRMPSAVGYQPTLATEMGAMQERITSVKNGSITSVQAVYVPADDLTDPAPATTFAHLDATTVLSRKIASLGIYPAVDPLESSSRILNPEVLGEIHYNTAQRVKNILQRYKELQDIIAILGMDELSEEDVKIVYRARRVQRFFSQPFHVAEQFTGLKGMRVSIEDTIKGFNMIINGELDHLPEAAFNLVGTIEQAIEKGEKMLKEAIPS</sequence>
<feature type="chain" id="PRO_1000143469" description="ATP synthase subunit beta">
    <location>
        <begin position="1"/>
        <end position="502"/>
    </location>
</feature>
<feature type="binding site" evidence="1">
    <location>
        <begin position="153"/>
        <end position="160"/>
    </location>
    <ligand>
        <name>ATP</name>
        <dbReference type="ChEBI" id="CHEBI:30616"/>
    </ligand>
</feature>
<dbReference type="EC" id="7.1.2.2" evidence="1"/>
<dbReference type="EMBL" id="CP001102">
    <property type="protein sequence ID" value="ACE06290.1"/>
    <property type="molecule type" value="Genomic_DNA"/>
</dbReference>
<dbReference type="RefSeq" id="WP_012473057.1">
    <property type="nucleotide sequence ID" value="NC_010830.1"/>
</dbReference>
<dbReference type="SMR" id="B3EST8"/>
<dbReference type="STRING" id="452471.Aasi_0925"/>
<dbReference type="KEGG" id="aas:Aasi_0925"/>
<dbReference type="eggNOG" id="COG0055">
    <property type="taxonomic scope" value="Bacteria"/>
</dbReference>
<dbReference type="HOGENOM" id="CLU_022398_0_2_10"/>
<dbReference type="OrthoDB" id="9801639at2"/>
<dbReference type="Proteomes" id="UP000001227">
    <property type="component" value="Chromosome"/>
</dbReference>
<dbReference type="GO" id="GO:0005886">
    <property type="term" value="C:plasma membrane"/>
    <property type="evidence" value="ECO:0007669"/>
    <property type="project" value="UniProtKB-SubCell"/>
</dbReference>
<dbReference type="GO" id="GO:0045259">
    <property type="term" value="C:proton-transporting ATP synthase complex"/>
    <property type="evidence" value="ECO:0007669"/>
    <property type="project" value="UniProtKB-KW"/>
</dbReference>
<dbReference type="GO" id="GO:0005524">
    <property type="term" value="F:ATP binding"/>
    <property type="evidence" value="ECO:0007669"/>
    <property type="project" value="UniProtKB-UniRule"/>
</dbReference>
<dbReference type="GO" id="GO:0016887">
    <property type="term" value="F:ATP hydrolysis activity"/>
    <property type="evidence" value="ECO:0007669"/>
    <property type="project" value="InterPro"/>
</dbReference>
<dbReference type="GO" id="GO:0046933">
    <property type="term" value="F:proton-transporting ATP synthase activity, rotational mechanism"/>
    <property type="evidence" value="ECO:0007669"/>
    <property type="project" value="UniProtKB-UniRule"/>
</dbReference>
<dbReference type="CDD" id="cd18110">
    <property type="entry name" value="ATP-synt_F1_beta_C"/>
    <property type="match status" value="1"/>
</dbReference>
<dbReference type="CDD" id="cd18115">
    <property type="entry name" value="ATP-synt_F1_beta_N"/>
    <property type="match status" value="1"/>
</dbReference>
<dbReference type="CDD" id="cd01133">
    <property type="entry name" value="F1-ATPase_beta_CD"/>
    <property type="match status" value="1"/>
</dbReference>
<dbReference type="FunFam" id="1.10.1140.10:FF:000001">
    <property type="entry name" value="ATP synthase subunit beta"/>
    <property type="match status" value="1"/>
</dbReference>
<dbReference type="FunFam" id="3.40.50.300:FF:000004">
    <property type="entry name" value="ATP synthase subunit beta"/>
    <property type="match status" value="1"/>
</dbReference>
<dbReference type="Gene3D" id="2.40.10.170">
    <property type="match status" value="1"/>
</dbReference>
<dbReference type="Gene3D" id="1.10.1140.10">
    <property type="entry name" value="Bovine Mitochondrial F1-atpase, Atp Synthase Beta Chain, Chain D, domain 3"/>
    <property type="match status" value="1"/>
</dbReference>
<dbReference type="Gene3D" id="3.40.50.300">
    <property type="entry name" value="P-loop containing nucleotide triphosphate hydrolases"/>
    <property type="match status" value="1"/>
</dbReference>
<dbReference type="HAMAP" id="MF_01347">
    <property type="entry name" value="ATP_synth_beta_bact"/>
    <property type="match status" value="1"/>
</dbReference>
<dbReference type="InterPro" id="IPR003593">
    <property type="entry name" value="AAA+_ATPase"/>
</dbReference>
<dbReference type="InterPro" id="IPR055190">
    <property type="entry name" value="ATP-synt_VA_C"/>
</dbReference>
<dbReference type="InterPro" id="IPR005722">
    <property type="entry name" value="ATP_synth_F1_bsu"/>
</dbReference>
<dbReference type="InterPro" id="IPR020003">
    <property type="entry name" value="ATPase_a/bsu_AS"/>
</dbReference>
<dbReference type="InterPro" id="IPR050053">
    <property type="entry name" value="ATPase_alpha/beta_chains"/>
</dbReference>
<dbReference type="InterPro" id="IPR004100">
    <property type="entry name" value="ATPase_F1/V1/A1_a/bsu_N"/>
</dbReference>
<dbReference type="InterPro" id="IPR036121">
    <property type="entry name" value="ATPase_F1/V1/A1_a/bsu_N_sf"/>
</dbReference>
<dbReference type="InterPro" id="IPR000194">
    <property type="entry name" value="ATPase_F1/V1/A1_a/bsu_nucl-bd"/>
</dbReference>
<dbReference type="InterPro" id="IPR024034">
    <property type="entry name" value="ATPase_F1/V1_b/a_C"/>
</dbReference>
<dbReference type="InterPro" id="IPR027417">
    <property type="entry name" value="P-loop_NTPase"/>
</dbReference>
<dbReference type="NCBIfam" id="TIGR01039">
    <property type="entry name" value="atpD"/>
    <property type="match status" value="1"/>
</dbReference>
<dbReference type="PANTHER" id="PTHR15184">
    <property type="entry name" value="ATP SYNTHASE"/>
    <property type="match status" value="1"/>
</dbReference>
<dbReference type="PANTHER" id="PTHR15184:SF71">
    <property type="entry name" value="ATP SYNTHASE SUBUNIT BETA, MITOCHONDRIAL"/>
    <property type="match status" value="1"/>
</dbReference>
<dbReference type="Pfam" id="PF00006">
    <property type="entry name" value="ATP-synt_ab"/>
    <property type="match status" value="1"/>
</dbReference>
<dbReference type="Pfam" id="PF02874">
    <property type="entry name" value="ATP-synt_ab_N"/>
    <property type="match status" value="1"/>
</dbReference>
<dbReference type="Pfam" id="PF22919">
    <property type="entry name" value="ATP-synt_VA_C"/>
    <property type="match status" value="1"/>
</dbReference>
<dbReference type="SMART" id="SM00382">
    <property type="entry name" value="AAA"/>
    <property type="match status" value="1"/>
</dbReference>
<dbReference type="SUPFAM" id="SSF47917">
    <property type="entry name" value="C-terminal domain of alpha and beta subunits of F1 ATP synthase"/>
    <property type="match status" value="1"/>
</dbReference>
<dbReference type="SUPFAM" id="SSF50615">
    <property type="entry name" value="N-terminal domain of alpha and beta subunits of F1 ATP synthase"/>
    <property type="match status" value="1"/>
</dbReference>
<dbReference type="SUPFAM" id="SSF52540">
    <property type="entry name" value="P-loop containing nucleoside triphosphate hydrolases"/>
    <property type="match status" value="1"/>
</dbReference>
<dbReference type="PROSITE" id="PS00152">
    <property type="entry name" value="ATPASE_ALPHA_BETA"/>
    <property type="match status" value="1"/>
</dbReference>
<accession>B3EST8</accession>
<protein>
    <recommendedName>
        <fullName evidence="1">ATP synthase subunit beta</fullName>
        <ecNumber evidence="1">7.1.2.2</ecNumber>
    </recommendedName>
    <alternativeName>
        <fullName evidence="1">ATP synthase F1 sector subunit beta</fullName>
    </alternativeName>
    <alternativeName>
        <fullName evidence="1">F-ATPase subunit beta</fullName>
    </alternativeName>
</protein>
<gene>
    <name evidence="1" type="primary">atpD</name>
    <name type="ordered locus">Aasi_0925</name>
</gene>
<organism>
    <name type="scientific">Amoebophilus asiaticus (strain 5a2)</name>
    <dbReference type="NCBI Taxonomy" id="452471"/>
    <lineage>
        <taxon>Bacteria</taxon>
        <taxon>Pseudomonadati</taxon>
        <taxon>Bacteroidota</taxon>
        <taxon>Cytophagia</taxon>
        <taxon>Cytophagales</taxon>
        <taxon>Amoebophilaceae</taxon>
        <taxon>Candidatus Amoebophilus</taxon>
    </lineage>
</organism>
<reference key="1">
    <citation type="journal article" date="2010" name="J. Bacteriol.">
        <title>The genome of the amoeba symbiont 'Candidatus Amoebophilus asiaticus' reveals common mechanisms for host cell interaction among amoeba-associated bacteria.</title>
        <authorList>
            <person name="Schmitz-Esser S."/>
            <person name="Tischler P."/>
            <person name="Arnold R."/>
            <person name="Montanaro J."/>
            <person name="Wagner M."/>
            <person name="Rattei T."/>
            <person name="Horn M."/>
        </authorList>
    </citation>
    <scope>NUCLEOTIDE SEQUENCE [LARGE SCALE GENOMIC DNA]</scope>
    <source>
        <strain>5a2</strain>
    </source>
</reference>
<proteinExistence type="inferred from homology"/>
<evidence type="ECO:0000255" key="1">
    <source>
        <dbReference type="HAMAP-Rule" id="MF_01347"/>
    </source>
</evidence>